<name>REV_JEMBR</name>
<sequence length="213" mass="23780">MMEEGRKEEPEERGEKSTMRDLLQRAVDKGHLTAREALDRWTLEDHGPPVHHVKLGRSNTVSIAECARGYRPCRGRRPARRPPIRRHPSFWGTLRGLVSEAQRRQEDRMSDLENRMAELEERFEDLALVDSGGKNPAAPAQSVSPPSSNPFAYSLSHFSKSKRVDCGEKGNRWGRPGAFPGAGISELDWIESGDGGDERPKGGRYPRGGNTPS</sequence>
<organismHost>
    <name type="scientific">Bos javanicus</name>
    <name type="common">Wild banteng</name>
    <dbReference type="NCBI Taxonomy" id="9906"/>
</organismHost>
<gene>
    <name type="primary">rev</name>
</gene>
<dbReference type="EMBL" id="U21603">
    <property type="protein sequence ID" value="AAA64393.1"/>
    <property type="molecule type" value="Genomic_RNA"/>
</dbReference>
<dbReference type="EMBL" id="U21603">
    <property type="protein sequence ID" value="AAA64396.1"/>
    <property type="molecule type" value="Genomic_RNA"/>
</dbReference>
<dbReference type="RefSeq" id="NP_042689.1">
    <molecule id="Q82855-2"/>
    <property type="nucleotide sequence ID" value="NC_001654.1"/>
</dbReference>
<dbReference type="RefSeq" id="NP_042690.1">
    <molecule id="Q82855-1"/>
    <property type="nucleotide sequence ID" value="NC_001654.1"/>
</dbReference>
<dbReference type="SMR" id="Q82855"/>
<dbReference type="GeneID" id="1497404"/>
<dbReference type="Proteomes" id="UP000246436">
    <property type="component" value="Genome"/>
</dbReference>
<dbReference type="GO" id="GO:0030430">
    <property type="term" value="C:host cell cytoplasm"/>
    <property type="evidence" value="ECO:0007669"/>
    <property type="project" value="UniProtKB-SubCell"/>
</dbReference>
<dbReference type="GO" id="GO:0044196">
    <property type="term" value="C:host cell nucleolus"/>
    <property type="evidence" value="ECO:0007669"/>
    <property type="project" value="UniProtKB-SubCell"/>
</dbReference>
<dbReference type="GO" id="GO:0003723">
    <property type="term" value="F:RNA binding"/>
    <property type="evidence" value="ECO:0007669"/>
    <property type="project" value="UniProtKB-KW"/>
</dbReference>
<dbReference type="GO" id="GO:0051028">
    <property type="term" value="P:mRNA transport"/>
    <property type="evidence" value="ECO:0007669"/>
    <property type="project" value="UniProtKB-KW"/>
</dbReference>
<dbReference type="Pfam" id="PF05858">
    <property type="entry name" value="BIV_Env"/>
    <property type="match status" value="1"/>
</dbReference>
<feature type="chain" id="PRO_0000272360" description="Protein Rev">
    <location>
        <begin position="1"/>
        <end position="213"/>
    </location>
</feature>
<feature type="region of interest" description="Disordered" evidence="3">
    <location>
        <begin position="1"/>
        <end position="20"/>
    </location>
</feature>
<feature type="region of interest" description="Disordered" evidence="3">
    <location>
        <begin position="165"/>
        <end position="213"/>
    </location>
</feature>
<feature type="coiled-coil region" evidence="2">
    <location>
        <begin position="97"/>
        <end position="131"/>
    </location>
</feature>
<feature type="short sequence motif" description="Nuclear localization signal and RNA-binding (RRE)" evidence="1">
    <location>
        <begin position="80"/>
        <end position="104"/>
    </location>
</feature>
<feature type="short sequence motif" description="Nuclear export signal" evidence="1">
    <location>
        <begin position="109"/>
        <end position="122"/>
    </location>
</feature>
<feature type="splice variant" id="VSP_022397" description="In isoform Short." evidence="4">
    <location>
        <begin position="36"/>
        <end position="47"/>
    </location>
</feature>
<accession>Q82855</accession>
<accession>Q82856</accession>
<evidence type="ECO:0000250" key="1"/>
<evidence type="ECO:0000255" key="2"/>
<evidence type="ECO:0000256" key="3">
    <source>
        <dbReference type="SAM" id="MobiDB-lite"/>
    </source>
</evidence>
<evidence type="ECO:0000305" key="4"/>
<protein>
    <recommendedName>
        <fullName>Protein Rev</fullName>
    </recommendedName>
</protein>
<reference key="1">
    <citation type="journal article" date="1995" name="J. Gen. Virol.">
        <title>Nucleotide sequence analysis of Jembrana disease virus: a bovine lentivirus associated with an acute disease syndrome.</title>
        <authorList>
            <person name="Chadwick B.J."/>
            <person name="Coelen R.J."/>
            <person name="Wilcox G.E."/>
            <person name="Sammels L.M."/>
            <person name="Kertayadnya G."/>
        </authorList>
    </citation>
    <scope>NUCLEOTIDE SEQUENCE [GENOMIC RNA] (ISOFORMS LONG AND SHORT)</scope>
    <source>
        <strain>Tabanan/87</strain>
    </source>
</reference>
<organism>
    <name type="scientific">Jembrana disease virus</name>
    <name type="common">JDV</name>
    <dbReference type="NCBI Taxonomy" id="36370"/>
    <lineage>
        <taxon>Viruses</taxon>
        <taxon>Riboviria</taxon>
        <taxon>Pararnavirae</taxon>
        <taxon>Artverviricota</taxon>
        <taxon>Revtraviricetes</taxon>
        <taxon>Ortervirales</taxon>
        <taxon>Retroviridae</taxon>
        <taxon>Orthoretrovirinae</taxon>
        <taxon>Lentivirus</taxon>
    </lineage>
</organism>
<comment type="function">
    <text evidence="1">Escorts unspliced or incompletely spliced viral pre-mRNAs (late transcripts) out of the nucleus of infected cells. These pre-mRNAs carry a recognition sequence called Rev responsive element (RRE) located in the env gene, that is not present in fully spliced viral mRNAs (early transcripts). This function is essential since most viral proteins are translated from unspliced or partially spliced pre-mRNAs which cannot exit the nucleus by the pathway used by fully processed cellular mRNAs (By similarity).</text>
</comment>
<comment type="subunit">
    <text evidence="1">Homomultimer; when bound to the RRE. Multimeric assembly is essential for activity (By similarity).</text>
</comment>
<comment type="subcellular location">
    <subcellularLocation>
        <location evidence="1">Host nucleus</location>
        <location evidence="1">Host nucleolus</location>
    </subcellularLocation>
    <subcellularLocation>
        <location evidence="1">Host cytoplasm</location>
    </subcellularLocation>
    <text evidence="1">The presence of both nuclear import and nuclear export signals leads to continuous shuttling between the nucleus and cytoplasm.</text>
</comment>
<comment type="alternative products">
    <event type="alternative splicing"/>
    <isoform>
        <id>Q82855-1</id>
        <name>Long</name>
        <sequence type="displayed"/>
    </isoform>
    <isoform>
        <id>Q82855-2</id>
        <name>Short</name>
        <sequence type="described" ref="VSP_022397"/>
    </isoform>
</comment>
<comment type="domain">
    <text evidence="1">The RNA-binding motif binds to the RRE present in incompletely spliced viral pre-mRNAs. This region also contains the NLS which mediates nuclear localization. These overlapping functions prevent Rev bound to RRE from undesirable return to the nucleus. When Rev binds the RRE, the NLS becomes masked while the NES remains accessible (By similarity).</text>
</comment>
<comment type="PTM">
    <text>Phosphorylated.</text>
</comment>
<proteinExistence type="inferred from homology"/>
<keyword id="KW-0025">Alternative splicing</keyword>
<keyword id="KW-0175">Coiled coil</keyword>
<keyword id="KW-1035">Host cytoplasm</keyword>
<keyword id="KW-1048">Host nucleus</keyword>
<keyword id="KW-0509">mRNA transport</keyword>
<keyword id="KW-0597">Phosphoprotein</keyword>
<keyword id="KW-1185">Reference proteome</keyword>
<keyword id="KW-0694">RNA-binding</keyword>
<keyword id="KW-0813">Transport</keyword>